<dbReference type="EMBL" id="U64907">
    <property type="protein sequence ID" value="AAD09508.1"/>
    <property type="status" value="ALT_INIT"/>
    <property type="molecule type" value="mRNA"/>
</dbReference>
<dbReference type="EMBL" id="AC009176">
    <property type="protein sequence ID" value="AAF13078.1"/>
    <property type="molecule type" value="Genomic_DNA"/>
</dbReference>
<dbReference type="EMBL" id="CP002686">
    <property type="protein sequence ID" value="AEE74572.1"/>
    <property type="molecule type" value="Genomic_DNA"/>
</dbReference>
<dbReference type="RefSeq" id="NP_187417.1">
    <property type="nucleotide sequence ID" value="NM_111639.1"/>
</dbReference>
<dbReference type="SMR" id="Q9SSF0"/>
<dbReference type="STRING" id="3702.Q9SSF0"/>
<dbReference type="PaxDb" id="3702-AT3G07600.1"/>
<dbReference type="ProteomicsDB" id="230326"/>
<dbReference type="EnsemblPlants" id="AT3G07600.1">
    <property type="protein sequence ID" value="AT3G07600.1"/>
    <property type="gene ID" value="AT3G07600"/>
</dbReference>
<dbReference type="GeneID" id="819951"/>
<dbReference type="Gramene" id="AT3G07600.1">
    <property type="protein sequence ID" value="AT3G07600.1"/>
    <property type="gene ID" value="AT3G07600"/>
</dbReference>
<dbReference type="KEGG" id="ath:AT3G07600"/>
<dbReference type="Araport" id="AT3G07600"/>
<dbReference type="TAIR" id="AT3G07600"/>
<dbReference type="eggNOG" id="KOG0017">
    <property type="taxonomic scope" value="Eukaryota"/>
</dbReference>
<dbReference type="HOGENOM" id="CLU_1680331_0_0_1"/>
<dbReference type="InParanoid" id="Q9SSF0"/>
<dbReference type="OMA" id="YPSYEYV"/>
<dbReference type="OrthoDB" id="692882at2759"/>
<dbReference type="PRO" id="PR:Q9SSF0"/>
<dbReference type="Proteomes" id="UP000006548">
    <property type="component" value="Chromosome 3"/>
</dbReference>
<dbReference type="ExpressionAtlas" id="Q9SSF0">
    <property type="expression patterns" value="baseline and differential"/>
</dbReference>
<dbReference type="GO" id="GO:0046872">
    <property type="term" value="F:metal ion binding"/>
    <property type="evidence" value="ECO:0007669"/>
    <property type="project" value="UniProtKB-KW"/>
</dbReference>
<dbReference type="Gene3D" id="3.30.70.100">
    <property type="match status" value="1"/>
</dbReference>
<dbReference type="InterPro" id="IPR042885">
    <property type="entry name" value="HIPP47/16"/>
</dbReference>
<dbReference type="InterPro" id="IPR006121">
    <property type="entry name" value="HMA_dom"/>
</dbReference>
<dbReference type="PANTHER" id="PTHR46932">
    <property type="entry name" value="HEAVY METAL-ASSOCIATED ISOPRENYLATED PLANT PROTEIN 47"/>
    <property type="match status" value="1"/>
</dbReference>
<dbReference type="PANTHER" id="PTHR46932:SF12">
    <property type="entry name" value="HEAVY METAL-ASSOCIATED ISOPRENYLATED PLANT PROTEIN 47"/>
    <property type="match status" value="1"/>
</dbReference>
<dbReference type="PROSITE" id="PS50846">
    <property type="entry name" value="HMA_2"/>
    <property type="match status" value="1"/>
</dbReference>
<accession>Q9SSF0</accession>
<accession>Q9ZRE6</accession>
<proteinExistence type="evidence at transcript level"/>
<reference key="1">
    <citation type="journal article" date="1996" name="Mol. Biotechnol.">
        <title>Identification of cDNAs encoding isoprenylated proteins.</title>
        <authorList>
            <person name="Crowell D.N."/>
            <person name="Biermann B.J."/>
            <person name="Randall S.K."/>
        </authorList>
    </citation>
    <scope>NUCLEOTIDE SEQUENCE [MRNA]</scope>
</reference>
<reference key="2">
    <citation type="journal article" date="2000" name="Nature">
        <title>Sequence and analysis of chromosome 3 of the plant Arabidopsis thaliana.</title>
        <authorList>
            <person name="Salanoubat M."/>
            <person name="Lemcke K."/>
            <person name="Rieger M."/>
            <person name="Ansorge W."/>
            <person name="Unseld M."/>
            <person name="Fartmann B."/>
            <person name="Valle G."/>
            <person name="Bloecker H."/>
            <person name="Perez-Alonso M."/>
            <person name="Obermaier B."/>
            <person name="Delseny M."/>
            <person name="Boutry M."/>
            <person name="Grivell L.A."/>
            <person name="Mache R."/>
            <person name="Puigdomenech P."/>
            <person name="De Simone V."/>
            <person name="Choisne N."/>
            <person name="Artiguenave F."/>
            <person name="Robert C."/>
            <person name="Brottier P."/>
            <person name="Wincker P."/>
            <person name="Cattolico L."/>
            <person name="Weissenbach J."/>
            <person name="Saurin W."/>
            <person name="Quetier F."/>
            <person name="Schaefer M."/>
            <person name="Mueller-Auer S."/>
            <person name="Gabel C."/>
            <person name="Fuchs M."/>
            <person name="Benes V."/>
            <person name="Wurmbach E."/>
            <person name="Drzonek H."/>
            <person name="Erfle H."/>
            <person name="Jordan N."/>
            <person name="Bangert S."/>
            <person name="Wiedelmann R."/>
            <person name="Kranz H."/>
            <person name="Voss H."/>
            <person name="Holland R."/>
            <person name="Brandt P."/>
            <person name="Nyakatura G."/>
            <person name="Vezzi A."/>
            <person name="D'Angelo M."/>
            <person name="Pallavicini A."/>
            <person name="Toppo S."/>
            <person name="Simionati B."/>
            <person name="Conrad A."/>
            <person name="Hornischer K."/>
            <person name="Kauer G."/>
            <person name="Loehnert T.-H."/>
            <person name="Nordsiek G."/>
            <person name="Reichelt J."/>
            <person name="Scharfe M."/>
            <person name="Schoen O."/>
            <person name="Bargues M."/>
            <person name="Terol J."/>
            <person name="Climent J."/>
            <person name="Navarro P."/>
            <person name="Collado C."/>
            <person name="Perez-Perez A."/>
            <person name="Ottenwaelder B."/>
            <person name="Duchemin D."/>
            <person name="Cooke R."/>
            <person name="Laudie M."/>
            <person name="Berger-Llauro C."/>
            <person name="Purnelle B."/>
            <person name="Masuy D."/>
            <person name="de Haan M."/>
            <person name="Maarse A.C."/>
            <person name="Alcaraz J.-P."/>
            <person name="Cottet A."/>
            <person name="Casacuberta E."/>
            <person name="Monfort A."/>
            <person name="Argiriou A."/>
            <person name="Flores M."/>
            <person name="Liguori R."/>
            <person name="Vitale D."/>
            <person name="Mannhaupt G."/>
            <person name="Haase D."/>
            <person name="Schoof H."/>
            <person name="Rudd S."/>
            <person name="Zaccaria P."/>
            <person name="Mewes H.-W."/>
            <person name="Mayer K.F.X."/>
            <person name="Kaul S."/>
            <person name="Town C.D."/>
            <person name="Koo H.L."/>
            <person name="Tallon L.J."/>
            <person name="Jenkins J."/>
            <person name="Rooney T."/>
            <person name="Rizzo M."/>
            <person name="Walts A."/>
            <person name="Utterback T."/>
            <person name="Fujii C.Y."/>
            <person name="Shea T.P."/>
            <person name="Creasy T.H."/>
            <person name="Haas B."/>
            <person name="Maiti R."/>
            <person name="Wu D."/>
            <person name="Peterson J."/>
            <person name="Van Aken S."/>
            <person name="Pai G."/>
            <person name="Militscher J."/>
            <person name="Sellers P."/>
            <person name="Gill J.E."/>
            <person name="Feldblyum T.V."/>
            <person name="Preuss D."/>
            <person name="Lin X."/>
            <person name="Nierman W.C."/>
            <person name="Salzberg S.L."/>
            <person name="White O."/>
            <person name="Venter J.C."/>
            <person name="Fraser C.M."/>
            <person name="Kaneko T."/>
            <person name="Nakamura Y."/>
            <person name="Sato S."/>
            <person name="Kato T."/>
            <person name="Asamizu E."/>
            <person name="Sasamoto S."/>
            <person name="Kimura T."/>
            <person name="Idesawa K."/>
            <person name="Kawashima K."/>
            <person name="Kishida Y."/>
            <person name="Kiyokawa C."/>
            <person name="Kohara M."/>
            <person name="Matsumoto M."/>
            <person name="Matsuno A."/>
            <person name="Muraki A."/>
            <person name="Nakayama S."/>
            <person name="Nakazaki N."/>
            <person name="Shinpo S."/>
            <person name="Takeuchi C."/>
            <person name="Wada T."/>
            <person name="Watanabe A."/>
            <person name="Yamada M."/>
            <person name="Yasuda M."/>
            <person name="Tabata S."/>
        </authorList>
    </citation>
    <scope>NUCLEOTIDE SEQUENCE [LARGE SCALE GENOMIC DNA]</scope>
    <source>
        <strain>cv. Columbia</strain>
    </source>
</reference>
<reference key="3">
    <citation type="journal article" date="2017" name="Plant J.">
        <title>Araport11: a complete reannotation of the Arabidopsis thaliana reference genome.</title>
        <authorList>
            <person name="Cheng C.Y."/>
            <person name="Krishnakumar V."/>
            <person name="Chan A.P."/>
            <person name="Thibaud-Nissen F."/>
            <person name="Schobel S."/>
            <person name="Town C.D."/>
        </authorList>
    </citation>
    <scope>GENOME REANNOTATION</scope>
    <source>
        <strain>cv. Columbia</strain>
    </source>
</reference>
<reference key="4">
    <citation type="journal article" date="2010" name="Metallomics">
        <title>Metallochaperone-like genes in Arabidopsis thaliana.</title>
        <authorList>
            <person name="Tehseen M."/>
            <person name="Cairns N."/>
            <person name="Sherson S."/>
            <person name="Cobbett C.S."/>
        </authorList>
    </citation>
    <scope>GENE FAMILY</scope>
    <scope>NOMENCLATURE</scope>
</reference>
<reference key="5">
    <citation type="journal article" date="2013" name="FEBS J.">
        <title>Heavy metal-associated isoprenylated plant protein (HIPP): characterization of a family of proteins exclusive to plants.</title>
        <authorList>
            <person name="de Abreu-Neto J.B."/>
            <person name="Turchetto-Zolet A.C."/>
            <person name="de Oliveira L.F."/>
            <person name="Zanettini M.H."/>
            <person name="Margis-Pinheiro M."/>
        </authorList>
    </citation>
    <scope>GENE FAMILY</scope>
    <scope>NOMENCLATURE</scope>
</reference>
<comment type="function">
    <text evidence="1">Probable heavy-metal-binding protein.</text>
</comment>
<comment type="similarity">
    <text evidence="8">Belongs to the HIPP family.</text>
</comment>
<comment type="caution">
    <text evidence="9">Contains an apparent HMA-like domain but lacks the core conserved Cys-X-X-Cys motif.</text>
</comment>
<comment type="sequence caution" evidence="8">
    <conflict type="erroneous initiation">
        <sequence resource="EMBL-CDS" id="AAD09508"/>
    </conflict>
    <text>Extended N-terminus.</text>
</comment>
<sequence>MKQKILIRIAMTDDTTRAKAMKTAVQFKGVNAVEIKGDHRNQIEVTGVEVDMIALINTLRKKVAFAELVSVAKVEPPKDGDKKPEEEKKPEEKKPEEKKPEEKKPEPCCQPWQKPEPCYQPWPHDGYGVPSSYPYPCDPYNQIGEPVYNQDPNCRIM</sequence>
<keyword id="KW-0449">Lipoprotein</keyword>
<keyword id="KW-0479">Metal-binding</keyword>
<keyword id="KW-0488">Methylation</keyword>
<keyword id="KW-0636">Prenylation</keyword>
<keyword id="KW-1185">Reference proteome</keyword>
<organism>
    <name type="scientific">Arabidopsis thaliana</name>
    <name type="common">Mouse-ear cress</name>
    <dbReference type="NCBI Taxonomy" id="3702"/>
    <lineage>
        <taxon>Eukaryota</taxon>
        <taxon>Viridiplantae</taxon>
        <taxon>Streptophyta</taxon>
        <taxon>Embryophyta</taxon>
        <taxon>Tracheophyta</taxon>
        <taxon>Spermatophyta</taxon>
        <taxon>Magnoliopsida</taxon>
        <taxon>eudicotyledons</taxon>
        <taxon>Gunneridae</taxon>
        <taxon>Pentapetalae</taxon>
        <taxon>rosids</taxon>
        <taxon>malvids</taxon>
        <taxon>Brassicales</taxon>
        <taxon>Brassicaceae</taxon>
        <taxon>Camelineae</taxon>
        <taxon>Arabidopsis</taxon>
    </lineage>
</organism>
<gene>
    <name evidence="5 6" type="primary">HIPP16</name>
    <name evidence="7" type="synonym">FP4</name>
    <name evidence="10" type="ordered locus">At3g07600</name>
    <name evidence="11" type="ORF">MLP3.5</name>
</gene>
<evidence type="ECO:0000250" key="1">
    <source>
        <dbReference type="UniProtKB" id="Q9LZF1"/>
    </source>
</evidence>
<evidence type="ECO:0000250" key="2">
    <source>
        <dbReference type="UniProtKB" id="Q9SZN7"/>
    </source>
</evidence>
<evidence type="ECO:0000255" key="3">
    <source>
        <dbReference type="PROSITE-ProRule" id="PRU00280"/>
    </source>
</evidence>
<evidence type="ECO:0000256" key="4">
    <source>
        <dbReference type="SAM" id="MobiDB-lite"/>
    </source>
</evidence>
<evidence type="ECO:0000303" key="5">
    <source>
    </source>
</evidence>
<evidence type="ECO:0000303" key="6">
    <source>
    </source>
</evidence>
<evidence type="ECO:0000303" key="7">
    <source>
    </source>
</evidence>
<evidence type="ECO:0000305" key="8"/>
<evidence type="ECO:0000305" key="9">
    <source>
    </source>
</evidence>
<evidence type="ECO:0000312" key="10">
    <source>
        <dbReference type="Araport" id="AT3G07600"/>
    </source>
</evidence>
<evidence type="ECO:0000312" key="11">
    <source>
        <dbReference type="EMBL" id="AAF13078.1"/>
    </source>
</evidence>
<protein>
    <recommendedName>
        <fullName evidence="5 6">Heavy metal-associated isoprenylated plant protein 16</fullName>
        <shortName evidence="5 6">AtHIP16</shortName>
    </recommendedName>
    <alternativeName>
        <fullName evidence="7">Farnesylated protein 4</fullName>
        <shortName evidence="7">AtFP4</shortName>
    </alternativeName>
</protein>
<feature type="chain" id="PRO_0000437821" description="Heavy metal-associated isoprenylated plant protein 16">
    <location>
        <begin position="1"/>
        <end position="154"/>
    </location>
</feature>
<feature type="propeptide" id="PRO_0000437822" description="Removed in mature form" evidence="8">
    <location>
        <begin position="155"/>
        <end position="157"/>
    </location>
</feature>
<feature type="domain" description="HMA" evidence="3">
    <location>
        <begin position="2"/>
        <end position="71"/>
    </location>
</feature>
<feature type="region of interest" description="Disordered" evidence="4">
    <location>
        <begin position="73"/>
        <end position="115"/>
    </location>
</feature>
<feature type="compositionally biased region" description="Basic and acidic residues" evidence="4">
    <location>
        <begin position="75"/>
        <end position="106"/>
    </location>
</feature>
<feature type="modified residue" description="Cysteine methyl ester" evidence="2">
    <location>
        <position position="154"/>
    </location>
</feature>
<feature type="lipid moiety-binding region" description="S-farnesyl cysteine" evidence="2">
    <location>
        <position position="154"/>
    </location>
</feature>
<name>HIP16_ARATH</name>